<keyword id="KW-0067">ATP-binding</keyword>
<keyword id="KW-0315">Glutamine amidotransferase</keyword>
<keyword id="KW-0436">Ligase</keyword>
<keyword id="KW-0460">Magnesium</keyword>
<keyword id="KW-0479">Metal-binding</keyword>
<keyword id="KW-0547">Nucleotide-binding</keyword>
<keyword id="KW-0665">Pyrimidine biosynthesis</keyword>
<dbReference type="EC" id="6.3.4.2" evidence="1"/>
<dbReference type="EMBL" id="CP001068">
    <property type="protein sequence ID" value="ACD26117.1"/>
    <property type="molecule type" value="Genomic_DNA"/>
</dbReference>
<dbReference type="SMR" id="B2U9C0"/>
<dbReference type="STRING" id="402626.Rpic_0969"/>
<dbReference type="MEROPS" id="C26.964"/>
<dbReference type="KEGG" id="rpi:Rpic_0969"/>
<dbReference type="PATRIC" id="fig|402626.5.peg.2170"/>
<dbReference type="eggNOG" id="COG0504">
    <property type="taxonomic scope" value="Bacteria"/>
</dbReference>
<dbReference type="HOGENOM" id="CLU_011675_5_0_4"/>
<dbReference type="UniPathway" id="UPA00159">
    <property type="reaction ID" value="UER00277"/>
</dbReference>
<dbReference type="GO" id="GO:0005829">
    <property type="term" value="C:cytosol"/>
    <property type="evidence" value="ECO:0007669"/>
    <property type="project" value="TreeGrafter"/>
</dbReference>
<dbReference type="GO" id="GO:0005524">
    <property type="term" value="F:ATP binding"/>
    <property type="evidence" value="ECO:0007669"/>
    <property type="project" value="UniProtKB-KW"/>
</dbReference>
<dbReference type="GO" id="GO:0003883">
    <property type="term" value="F:CTP synthase activity"/>
    <property type="evidence" value="ECO:0007669"/>
    <property type="project" value="UniProtKB-UniRule"/>
</dbReference>
<dbReference type="GO" id="GO:0004359">
    <property type="term" value="F:glutaminase activity"/>
    <property type="evidence" value="ECO:0007669"/>
    <property type="project" value="RHEA"/>
</dbReference>
<dbReference type="GO" id="GO:0042802">
    <property type="term" value="F:identical protein binding"/>
    <property type="evidence" value="ECO:0007669"/>
    <property type="project" value="TreeGrafter"/>
</dbReference>
<dbReference type="GO" id="GO:0046872">
    <property type="term" value="F:metal ion binding"/>
    <property type="evidence" value="ECO:0007669"/>
    <property type="project" value="UniProtKB-KW"/>
</dbReference>
<dbReference type="GO" id="GO:0044210">
    <property type="term" value="P:'de novo' CTP biosynthetic process"/>
    <property type="evidence" value="ECO:0007669"/>
    <property type="project" value="UniProtKB-UniRule"/>
</dbReference>
<dbReference type="GO" id="GO:0019856">
    <property type="term" value="P:pyrimidine nucleobase biosynthetic process"/>
    <property type="evidence" value="ECO:0007669"/>
    <property type="project" value="TreeGrafter"/>
</dbReference>
<dbReference type="CDD" id="cd03113">
    <property type="entry name" value="CTPS_N"/>
    <property type="match status" value="1"/>
</dbReference>
<dbReference type="CDD" id="cd01746">
    <property type="entry name" value="GATase1_CTP_Synthase"/>
    <property type="match status" value="1"/>
</dbReference>
<dbReference type="FunFam" id="3.40.50.300:FF:000009">
    <property type="entry name" value="CTP synthase"/>
    <property type="match status" value="1"/>
</dbReference>
<dbReference type="FunFam" id="3.40.50.880:FF:000002">
    <property type="entry name" value="CTP synthase"/>
    <property type="match status" value="1"/>
</dbReference>
<dbReference type="Gene3D" id="3.40.50.880">
    <property type="match status" value="1"/>
</dbReference>
<dbReference type="Gene3D" id="3.40.50.300">
    <property type="entry name" value="P-loop containing nucleotide triphosphate hydrolases"/>
    <property type="match status" value="1"/>
</dbReference>
<dbReference type="HAMAP" id="MF_01227">
    <property type="entry name" value="PyrG"/>
    <property type="match status" value="1"/>
</dbReference>
<dbReference type="InterPro" id="IPR029062">
    <property type="entry name" value="Class_I_gatase-like"/>
</dbReference>
<dbReference type="InterPro" id="IPR004468">
    <property type="entry name" value="CTP_synthase"/>
</dbReference>
<dbReference type="InterPro" id="IPR017456">
    <property type="entry name" value="CTP_synthase_N"/>
</dbReference>
<dbReference type="InterPro" id="IPR017926">
    <property type="entry name" value="GATASE"/>
</dbReference>
<dbReference type="InterPro" id="IPR033828">
    <property type="entry name" value="GATase1_CTP_Synthase"/>
</dbReference>
<dbReference type="InterPro" id="IPR027417">
    <property type="entry name" value="P-loop_NTPase"/>
</dbReference>
<dbReference type="NCBIfam" id="NF003792">
    <property type="entry name" value="PRK05380.1"/>
    <property type="match status" value="1"/>
</dbReference>
<dbReference type="NCBIfam" id="TIGR00337">
    <property type="entry name" value="PyrG"/>
    <property type="match status" value="1"/>
</dbReference>
<dbReference type="PANTHER" id="PTHR11550">
    <property type="entry name" value="CTP SYNTHASE"/>
    <property type="match status" value="1"/>
</dbReference>
<dbReference type="PANTHER" id="PTHR11550:SF0">
    <property type="entry name" value="CTP SYNTHASE-RELATED"/>
    <property type="match status" value="1"/>
</dbReference>
<dbReference type="Pfam" id="PF06418">
    <property type="entry name" value="CTP_synth_N"/>
    <property type="match status" value="1"/>
</dbReference>
<dbReference type="Pfam" id="PF00117">
    <property type="entry name" value="GATase"/>
    <property type="match status" value="1"/>
</dbReference>
<dbReference type="SUPFAM" id="SSF52317">
    <property type="entry name" value="Class I glutamine amidotransferase-like"/>
    <property type="match status" value="1"/>
</dbReference>
<dbReference type="SUPFAM" id="SSF52540">
    <property type="entry name" value="P-loop containing nucleoside triphosphate hydrolases"/>
    <property type="match status" value="1"/>
</dbReference>
<dbReference type="PROSITE" id="PS51273">
    <property type="entry name" value="GATASE_TYPE_1"/>
    <property type="match status" value="1"/>
</dbReference>
<reference key="1">
    <citation type="submission" date="2008-05" db="EMBL/GenBank/DDBJ databases">
        <title>Complete sequence of chromosome 1 of Ralstonia pickettii 12J.</title>
        <authorList>
            <person name="Lucas S."/>
            <person name="Copeland A."/>
            <person name="Lapidus A."/>
            <person name="Glavina del Rio T."/>
            <person name="Dalin E."/>
            <person name="Tice H."/>
            <person name="Bruce D."/>
            <person name="Goodwin L."/>
            <person name="Pitluck S."/>
            <person name="Meincke L."/>
            <person name="Brettin T."/>
            <person name="Detter J.C."/>
            <person name="Han C."/>
            <person name="Kuske C.R."/>
            <person name="Schmutz J."/>
            <person name="Larimer F."/>
            <person name="Land M."/>
            <person name="Hauser L."/>
            <person name="Kyrpides N."/>
            <person name="Mikhailova N."/>
            <person name="Marsh T."/>
            <person name="Richardson P."/>
        </authorList>
    </citation>
    <scope>NUCLEOTIDE SEQUENCE [LARGE SCALE GENOMIC DNA]</scope>
    <source>
        <strain>12J</strain>
    </source>
</reference>
<evidence type="ECO:0000255" key="1">
    <source>
        <dbReference type="HAMAP-Rule" id="MF_01227"/>
    </source>
</evidence>
<name>PYRG_RALPJ</name>
<gene>
    <name evidence="1" type="primary">pyrG</name>
    <name type="ordered locus">Rpic_0969</name>
</gene>
<comment type="function">
    <text evidence="1">Catalyzes the ATP-dependent amination of UTP to CTP with either L-glutamine or ammonia as the source of nitrogen. Regulates intracellular CTP levels through interactions with the four ribonucleotide triphosphates.</text>
</comment>
<comment type="catalytic activity">
    <reaction evidence="1">
        <text>UTP + L-glutamine + ATP + H2O = CTP + L-glutamate + ADP + phosphate + 2 H(+)</text>
        <dbReference type="Rhea" id="RHEA:26426"/>
        <dbReference type="ChEBI" id="CHEBI:15377"/>
        <dbReference type="ChEBI" id="CHEBI:15378"/>
        <dbReference type="ChEBI" id="CHEBI:29985"/>
        <dbReference type="ChEBI" id="CHEBI:30616"/>
        <dbReference type="ChEBI" id="CHEBI:37563"/>
        <dbReference type="ChEBI" id="CHEBI:43474"/>
        <dbReference type="ChEBI" id="CHEBI:46398"/>
        <dbReference type="ChEBI" id="CHEBI:58359"/>
        <dbReference type="ChEBI" id="CHEBI:456216"/>
        <dbReference type="EC" id="6.3.4.2"/>
    </reaction>
</comment>
<comment type="catalytic activity">
    <reaction evidence="1">
        <text>L-glutamine + H2O = L-glutamate + NH4(+)</text>
        <dbReference type="Rhea" id="RHEA:15889"/>
        <dbReference type="ChEBI" id="CHEBI:15377"/>
        <dbReference type="ChEBI" id="CHEBI:28938"/>
        <dbReference type="ChEBI" id="CHEBI:29985"/>
        <dbReference type="ChEBI" id="CHEBI:58359"/>
    </reaction>
</comment>
<comment type="catalytic activity">
    <reaction evidence="1">
        <text>UTP + NH4(+) + ATP = CTP + ADP + phosphate + 2 H(+)</text>
        <dbReference type="Rhea" id="RHEA:16597"/>
        <dbReference type="ChEBI" id="CHEBI:15378"/>
        <dbReference type="ChEBI" id="CHEBI:28938"/>
        <dbReference type="ChEBI" id="CHEBI:30616"/>
        <dbReference type="ChEBI" id="CHEBI:37563"/>
        <dbReference type="ChEBI" id="CHEBI:43474"/>
        <dbReference type="ChEBI" id="CHEBI:46398"/>
        <dbReference type="ChEBI" id="CHEBI:456216"/>
    </reaction>
</comment>
<comment type="activity regulation">
    <text evidence="1">Allosterically activated by GTP, when glutamine is the substrate; GTP has no effect on the reaction when ammonia is the substrate. The allosteric effector GTP functions by stabilizing the protein conformation that binds the tetrahedral intermediate(s) formed during glutamine hydrolysis. Inhibited by the product CTP, via allosteric rather than competitive inhibition.</text>
</comment>
<comment type="pathway">
    <text evidence="1">Pyrimidine metabolism; CTP biosynthesis via de novo pathway; CTP from UDP: step 2/2.</text>
</comment>
<comment type="subunit">
    <text evidence="1">Homotetramer.</text>
</comment>
<comment type="miscellaneous">
    <text evidence="1">CTPSs have evolved a hybrid strategy for distinguishing between UTP and CTP. The overlapping regions of the product feedback inhibitory and substrate sites recognize a common feature in both compounds, the triphosphate moiety. To differentiate isosteric substrate and product pyrimidine rings, an additional pocket far from the expected kinase/ligase catalytic site, specifically recognizes the cytosine and ribose portions of the product inhibitor.</text>
</comment>
<comment type="similarity">
    <text evidence="1">Belongs to the CTP synthase family.</text>
</comment>
<accession>B2U9C0</accession>
<proteinExistence type="inferred from homology"/>
<feature type="chain" id="PRO_1000139543" description="CTP synthase">
    <location>
        <begin position="1"/>
        <end position="553"/>
    </location>
</feature>
<feature type="domain" description="Glutamine amidotransferase type-1" evidence="1">
    <location>
        <begin position="295"/>
        <end position="547"/>
    </location>
</feature>
<feature type="region of interest" description="Amidoligase domain" evidence="1">
    <location>
        <begin position="1"/>
        <end position="270"/>
    </location>
</feature>
<feature type="active site" description="Nucleophile; for glutamine hydrolysis" evidence="1">
    <location>
        <position position="383"/>
    </location>
</feature>
<feature type="active site" evidence="1">
    <location>
        <position position="520"/>
    </location>
</feature>
<feature type="active site" evidence="1">
    <location>
        <position position="522"/>
    </location>
</feature>
<feature type="binding site" evidence="1">
    <location>
        <position position="13"/>
    </location>
    <ligand>
        <name>CTP</name>
        <dbReference type="ChEBI" id="CHEBI:37563"/>
        <note>allosteric inhibitor</note>
    </ligand>
</feature>
<feature type="binding site" evidence="1">
    <location>
        <position position="13"/>
    </location>
    <ligand>
        <name>UTP</name>
        <dbReference type="ChEBI" id="CHEBI:46398"/>
    </ligand>
</feature>
<feature type="binding site" evidence="1">
    <location>
        <begin position="14"/>
        <end position="19"/>
    </location>
    <ligand>
        <name>ATP</name>
        <dbReference type="ChEBI" id="CHEBI:30616"/>
    </ligand>
</feature>
<feature type="binding site" evidence="1">
    <location>
        <position position="71"/>
    </location>
    <ligand>
        <name>ATP</name>
        <dbReference type="ChEBI" id="CHEBI:30616"/>
    </ligand>
</feature>
<feature type="binding site" evidence="1">
    <location>
        <position position="71"/>
    </location>
    <ligand>
        <name>Mg(2+)</name>
        <dbReference type="ChEBI" id="CHEBI:18420"/>
    </ligand>
</feature>
<feature type="binding site" evidence="1">
    <location>
        <position position="144"/>
    </location>
    <ligand>
        <name>Mg(2+)</name>
        <dbReference type="ChEBI" id="CHEBI:18420"/>
    </ligand>
</feature>
<feature type="binding site" evidence="1">
    <location>
        <begin position="151"/>
        <end position="153"/>
    </location>
    <ligand>
        <name>CTP</name>
        <dbReference type="ChEBI" id="CHEBI:37563"/>
        <note>allosteric inhibitor</note>
    </ligand>
</feature>
<feature type="binding site" evidence="1">
    <location>
        <begin position="191"/>
        <end position="196"/>
    </location>
    <ligand>
        <name>CTP</name>
        <dbReference type="ChEBI" id="CHEBI:37563"/>
        <note>allosteric inhibitor</note>
    </ligand>
</feature>
<feature type="binding site" evidence="1">
    <location>
        <begin position="191"/>
        <end position="196"/>
    </location>
    <ligand>
        <name>UTP</name>
        <dbReference type="ChEBI" id="CHEBI:46398"/>
    </ligand>
</feature>
<feature type="binding site" evidence="1">
    <location>
        <position position="227"/>
    </location>
    <ligand>
        <name>CTP</name>
        <dbReference type="ChEBI" id="CHEBI:37563"/>
        <note>allosteric inhibitor</note>
    </ligand>
</feature>
<feature type="binding site" evidence="1">
    <location>
        <position position="227"/>
    </location>
    <ligand>
        <name>UTP</name>
        <dbReference type="ChEBI" id="CHEBI:46398"/>
    </ligand>
</feature>
<feature type="binding site" evidence="1">
    <location>
        <position position="356"/>
    </location>
    <ligand>
        <name>L-glutamine</name>
        <dbReference type="ChEBI" id="CHEBI:58359"/>
    </ligand>
</feature>
<feature type="binding site" evidence="1">
    <location>
        <begin position="384"/>
        <end position="387"/>
    </location>
    <ligand>
        <name>L-glutamine</name>
        <dbReference type="ChEBI" id="CHEBI:58359"/>
    </ligand>
</feature>
<feature type="binding site" evidence="1">
    <location>
        <position position="407"/>
    </location>
    <ligand>
        <name>L-glutamine</name>
        <dbReference type="ChEBI" id="CHEBI:58359"/>
    </ligand>
</feature>
<feature type="binding site" evidence="1">
    <location>
        <position position="473"/>
    </location>
    <ligand>
        <name>L-glutamine</name>
        <dbReference type="ChEBI" id="CHEBI:58359"/>
    </ligand>
</feature>
<protein>
    <recommendedName>
        <fullName evidence="1">CTP synthase</fullName>
        <ecNumber evidence="1">6.3.4.2</ecNumber>
    </recommendedName>
    <alternativeName>
        <fullName evidence="1">Cytidine 5'-triphosphate synthase</fullName>
    </alternativeName>
    <alternativeName>
        <fullName evidence="1">Cytidine triphosphate synthetase</fullName>
        <shortName evidence="1">CTP synthetase</shortName>
        <shortName evidence="1">CTPS</shortName>
    </alternativeName>
    <alternativeName>
        <fullName evidence="1">UTP--ammonia ligase</fullName>
    </alternativeName>
</protein>
<organism>
    <name type="scientific">Ralstonia pickettii (strain 12J)</name>
    <dbReference type="NCBI Taxonomy" id="402626"/>
    <lineage>
        <taxon>Bacteria</taxon>
        <taxon>Pseudomonadati</taxon>
        <taxon>Pseudomonadota</taxon>
        <taxon>Betaproteobacteria</taxon>
        <taxon>Burkholderiales</taxon>
        <taxon>Burkholderiaceae</taxon>
        <taxon>Ralstonia</taxon>
    </lineage>
</organism>
<sequence length="553" mass="61034">MTKFVFVTGGVVSSLGKGIAAASLAAILESRGLKVTLLKLDPYINVDPGTMSPFQHGEVFVTEDGAETDLDLGHYERFVSAKMRKANNFTTGQIYESVIRKERRGEYLGKTVQVIPHITNEIQAFIERGAAASHDGKADVAIVEIGGTVGDIESLPFLEAARQMSLRLGRNQVAFAHLTLVPFIASAGELKTKPTQHSVQKLREIGVQPTALLCRADRPIPDDERAKISLFANMPQDAVISVWDVDTIYKIPQMLNEQGLDRIICEELRIEAPPADLSVWAHMVHTLENPQHEITIGMVGKYVDLTESYKSLIEALRHAGLHTSTRVNIEYIDSEELESGHTQVLDTLDAILVPGGFGKRGTEGKIRAIQYAREKGVPYLGICLGMQLAVIEFARHLAGMKDANSTEFNDETEHPVVALITEWLDRDGRVEKRSADSDLGGTMRLGSQRVPVQSGTKAAAIYGAEVNERHRHRYEVNNHYVPQLEKAGMIISARTPSENLPEMMELPASMHPWFVGVQFHPEFTSTPRDGHPLFKAYVEAALAHQQNTQRAAA</sequence>